<organism>
    <name type="scientific">Dictyostelium discoideum</name>
    <name type="common">Social amoeba</name>
    <dbReference type="NCBI Taxonomy" id="44689"/>
    <lineage>
        <taxon>Eukaryota</taxon>
        <taxon>Amoebozoa</taxon>
        <taxon>Evosea</taxon>
        <taxon>Eumycetozoa</taxon>
        <taxon>Dictyostelia</taxon>
        <taxon>Dictyosteliales</taxon>
        <taxon>Dictyosteliaceae</taxon>
        <taxon>Dictyostelium</taxon>
    </lineage>
</organism>
<feature type="chain" id="PRO_0000343633" description="Nuclear pore complex protein DDB_G0274915">
    <location>
        <begin position="1"/>
        <end position="1839"/>
    </location>
</feature>
<feature type="region of interest" description="Disordered" evidence="1">
    <location>
        <begin position="1"/>
        <end position="54"/>
    </location>
</feature>
<feature type="region of interest" description="Disordered" evidence="1">
    <location>
        <begin position="78"/>
        <end position="150"/>
    </location>
</feature>
<feature type="region of interest" description="Disordered" evidence="1">
    <location>
        <begin position="325"/>
        <end position="367"/>
    </location>
</feature>
<feature type="region of interest" description="Disordered" evidence="1">
    <location>
        <begin position="480"/>
        <end position="568"/>
    </location>
</feature>
<feature type="region of interest" description="Disordered" evidence="1">
    <location>
        <begin position="589"/>
        <end position="636"/>
    </location>
</feature>
<feature type="region of interest" description="Disordered" evidence="1">
    <location>
        <begin position="657"/>
        <end position="705"/>
    </location>
</feature>
<feature type="region of interest" description="Disordered" evidence="1">
    <location>
        <begin position="739"/>
        <end position="810"/>
    </location>
</feature>
<feature type="region of interest" description="Disordered" evidence="1">
    <location>
        <begin position="818"/>
        <end position="837"/>
    </location>
</feature>
<feature type="region of interest" description="Disordered" evidence="1">
    <location>
        <begin position="846"/>
        <end position="1106"/>
    </location>
</feature>
<feature type="region of interest" description="Disordered" evidence="1">
    <location>
        <begin position="1129"/>
        <end position="1839"/>
    </location>
</feature>
<feature type="compositionally biased region" description="Polar residues" evidence="1">
    <location>
        <begin position="1"/>
        <end position="27"/>
    </location>
</feature>
<feature type="compositionally biased region" description="Polar residues" evidence="1">
    <location>
        <begin position="35"/>
        <end position="54"/>
    </location>
</feature>
<feature type="compositionally biased region" description="Low complexity" evidence="1">
    <location>
        <begin position="80"/>
        <end position="90"/>
    </location>
</feature>
<feature type="compositionally biased region" description="Polar residues" evidence="1">
    <location>
        <begin position="91"/>
        <end position="101"/>
    </location>
</feature>
<feature type="compositionally biased region" description="Low complexity" evidence="1">
    <location>
        <begin position="102"/>
        <end position="148"/>
    </location>
</feature>
<feature type="compositionally biased region" description="Low complexity" evidence="1">
    <location>
        <begin position="329"/>
        <end position="343"/>
    </location>
</feature>
<feature type="compositionally biased region" description="Polar residues" evidence="1">
    <location>
        <begin position="344"/>
        <end position="354"/>
    </location>
</feature>
<feature type="compositionally biased region" description="Low complexity" evidence="1">
    <location>
        <begin position="495"/>
        <end position="568"/>
    </location>
</feature>
<feature type="compositionally biased region" description="Low complexity" evidence="1">
    <location>
        <begin position="589"/>
        <end position="607"/>
    </location>
</feature>
<feature type="compositionally biased region" description="Polar residues" evidence="1">
    <location>
        <begin position="616"/>
        <end position="628"/>
    </location>
</feature>
<feature type="compositionally biased region" description="Low complexity" evidence="1">
    <location>
        <begin position="658"/>
        <end position="671"/>
    </location>
</feature>
<feature type="compositionally biased region" description="Low complexity" evidence="1">
    <location>
        <begin position="739"/>
        <end position="760"/>
    </location>
</feature>
<feature type="compositionally biased region" description="Basic and acidic residues" evidence="1">
    <location>
        <begin position="761"/>
        <end position="773"/>
    </location>
</feature>
<feature type="compositionally biased region" description="Low complexity" evidence="1">
    <location>
        <begin position="774"/>
        <end position="803"/>
    </location>
</feature>
<feature type="compositionally biased region" description="Low complexity" evidence="1">
    <location>
        <begin position="827"/>
        <end position="837"/>
    </location>
</feature>
<feature type="compositionally biased region" description="Low complexity" evidence="1">
    <location>
        <begin position="846"/>
        <end position="871"/>
    </location>
</feature>
<feature type="compositionally biased region" description="Acidic residues" evidence="1">
    <location>
        <begin position="896"/>
        <end position="923"/>
    </location>
</feature>
<feature type="compositionally biased region" description="Acidic residues" evidence="1">
    <location>
        <begin position="944"/>
        <end position="958"/>
    </location>
</feature>
<feature type="compositionally biased region" description="Low complexity" evidence="1">
    <location>
        <begin position="1005"/>
        <end position="1021"/>
    </location>
</feature>
<feature type="compositionally biased region" description="Low complexity" evidence="1">
    <location>
        <begin position="1046"/>
        <end position="1060"/>
    </location>
</feature>
<feature type="compositionally biased region" description="Basic and acidic residues" evidence="1">
    <location>
        <begin position="1061"/>
        <end position="1070"/>
    </location>
</feature>
<feature type="compositionally biased region" description="Low complexity" evidence="1">
    <location>
        <begin position="1071"/>
        <end position="1092"/>
    </location>
</feature>
<feature type="compositionally biased region" description="Polar residues" evidence="1">
    <location>
        <begin position="1093"/>
        <end position="1106"/>
    </location>
</feature>
<feature type="compositionally biased region" description="Low complexity" evidence="1">
    <location>
        <begin position="1129"/>
        <end position="1242"/>
    </location>
</feature>
<feature type="compositionally biased region" description="Low complexity" evidence="1">
    <location>
        <begin position="1250"/>
        <end position="1292"/>
    </location>
</feature>
<feature type="compositionally biased region" description="Polar residues" evidence="1">
    <location>
        <begin position="1293"/>
        <end position="1310"/>
    </location>
</feature>
<feature type="compositionally biased region" description="Low complexity" evidence="1">
    <location>
        <begin position="1311"/>
        <end position="1384"/>
    </location>
</feature>
<feature type="compositionally biased region" description="Low complexity" evidence="1">
    <location>
        <begin position="1397"/>
        <end position="1498"/>
    </location>
</feature>
<feature type="compositionally biased region" description="Polar residues" evidence="1">
    <location>
        <begin position="1507"/>
        <end position="1521"/>
    </location>
</feature>
<feature type="compositionally biased region" description="Low complexity" evidence="1">
    <location>
        <begin position="1522"/>
        <end position="1673"/>
    </location>
</feature>
<feature type="compositionally biased region" description="Polar residues" evidence="1">
    <location>
        <begin position="1676"/>
        <end position="1708"/>
    </location>
</feature>
<feature type="compositionally biased region" description="Low complexity" evidence="1">
    <location>
        <begin position="1712"/>
        <end position="1810"/>
    </location>
</feature>
<proteinExistence type="predicted"/>
<name>NUPL_DICDI</name>
<protein>
    <recommendedName>
        <fullName>Nuclear pore complex protein DDB_G0274915</fullName>
    </recommendedName>
</protein>
<evidence type="ECO:0000256" key="1">
    <source>
        <dbReference type="SAM" id="MobiDB-lite"/>
    </source>
</evidence>
<reference key="1">
    <citation type="journal article" date="2002" name="Nature">
        <title>Sequence and analysis of chromosome 2 of Dictyostelium discoideum.</title>
        <authorList>
            <person name="Gloeckner G."/>
            <person name="Eichinger L."/>
            <person name="Szafranski K."/>
            <person name="Pachebat J.A."/>
            <person name="Bankier A.T."/>
            <person name="Dear P.H."/>
            <person name="Lehmann R."/>
            <person name="Baumgart C."/>
            <person name="Parra G."/>
            <person name="Abril J.F."/>
            <person name="Guigo R."/>
            <person name="Kumpf K."/>
            <person name="Tunggal B."/>
            <person name="Cox E.C."/>
            <person name="Quail M.A."/>
            <person name="Platzer M."/>
            <person name="Rosenthal A."/>
            <person name="Noegel A.A."/>
        </authorList>
    </citation>
    <scope>NUCLEOTIDE SEQUENCE [LARGE SCALE GENOMIC DNA]</scope>
    <source>
        <strain>AX4</strain>
    </source>
</reference>
<reference key="2">
    <citation type="journal article" date="2005" name="Nature">
        <title>The genome of the social amoeba Dictyostelium discoideum.</title>
        <authorList>
            <person name="Eichinger L."/>
            <person name="Pachebat J.A."/>
            <person name="Gloeckner G."/>
            <person name="Rajandream M.A."/>
            <person name="Sucgang R."/>
            <person name="Berriman M."/>
            <person name="Song J."/>
            <person name="Olsen R."/>
            <person name="Szafranski K."/>
            <person name="Xu Q."/>
            <person name="Tunggal B."/>
            <person name="Kummerfeld S."/>
            <person name="Madera M."/>
            <person name="Konfortov B.A."/>
            <person name="Rivero F."/>
            <person name="Bankier A.T."/>
            <person name="Lehmann R."/>
            <person name="Hamlin N."/>
            <person name="Davies R."/>
            <person name="Gaudet P."/>
            <person name="Fey P."/>
            <person name="Pilcher K."/>
            <person name="Chen G."/>
            <person name="Saunders D."/>
            <person name="Sodergren E.J."/>
            <person name="Davis P."/>
            <person name="Kerhornou A."/>
            <person name="Nie X."/>
            <person name="Hall N."/>
            <person name="Anjard C."/>
            <person name="Hemphill L."/>
            <person name="Bason N."/>
            <person name="Farbrother P."/>
            <person name="Desany B."/>
            <person name="Just E."/>
            <person name="Morio T."/>
            <person name="Rost R."/>
            <person name="Churcher C.M."/>
            <person name="Cooper J."/>
            <person name="Haydock S."/>
            <person name="van Driessche N."/>
            <person name="Cronin A."/>
            <person name="Goodhead I."/>
            <person name="Muzny D.M."/>
            <person name="Mourier T."/>
            <person name="Pain A."/>
            <person name="Lu M."/>
            <person name="Harper D."/>
            <person name="Lindsay R."/>
            <person name="Hauser H."/>
            <person name="James K.D."/>
            <person name="Quiles M."/>
            <person name="Madan Babu M."/>
            <person name="Saito T."/>
            <person name="Buchrieser C."/>
            <person name="Wardroper A."/>
            <person name="Felder M."/>
            <person name="Thangavelu M."/>
            <person name="Johnson D."/>
            <person name="Knights A."/>
            <person name="Loulseged H."/>
            <person name="Mungall K.L."/>
            <person name="Oliver K."/>
            <person name="Price C."/>
            <person name="Quail M.A."/>
            <person name="Urushihara H."/>
            <person name="Hernandez J."/>
            <person name="Rabbinowitsch E."/>
            <person name="Steffen D."/>
            <person name="Sanders M."/>
            <person name="Ma J."/>
            <person name="Kohara Y."/>
            <person name="Sharp S."/>
            <person name="Simmonds M.N."/>
            <person name="Spiegler S."/>
            <person name="Tivey A."/>
            <person name="Sugano S."/>
            <person name="White B."/>
            <person name="Walker D."/>
            <person name="Woodward J.R."/>
            <person name="Winckler T."/>
            <person name="Tanaka Y."/>
            <person name="Shaulsky G."/>
            <person name="Schleicher M."/>
            <person name="Weinstock G.M."/>
            <person name="Rosenthal A."/>
            <person name="Cox E.C."/>
            <person name="Chisholm R.L."/>
            <person name="Gibbs R.A."/>
            <person name="Loomis W.F."/>
            <person name="Platzer M."/>
            <person name="Kay R.R."/>
            <person name="Williams J.G."/>
            <person name="Dear P.H."/>
            <person name="Noegel A.A."/>
            <person name="Barrell B.G."/>
            <person name="Kuspa A."/>
        </authorList>
    </citation>
    <scope>NUCLEOTIDE SEQUENCE [LARGE SCALE GENOMIC DNA]</scope>
    <source>
        <strain>AX4</strain>
    </source>
</reference>
<dbReference type="EMBL" id="AAFI02000012">
    <property type="protein sequence ID" value="EEU04130.1"/>
    <property type="molecule type" value="Genomic_DNA"/>
</dbReference>
<dbReference type="RefSeq" id="XP_002649182.2">
    <property type="nucleotide sequence ID" value="XM_002649136.1"/>
</dbReference>
<dbReference type="STRING" id="44689.Q555D2"/>
<dbReference type="GlyGen" id="Q555D2">
    <property type="glycosylation" value="7 sites"/>
</dbReference>
<dbReference type="PaxDb" id="44689-DDB0266503"/>
<dbReference type="GeneID" id="8619570"/>
<dbReference type="KEGG" id="ddi:DDB_G0274915"/>
<dbReference type="dictyBase" id="DDB_G0274915"/>
<dbReference type="VEuPathDB" id="AmoebaDB:DDB_G0274915"/>
<dbReference type="eggNOG" id="KOG0845">
    <property type="taxonomic scope" value="Eukaryota"/>
</dbReference>
<dbReference type="HOGENOM" id="CLU_237182_0_0_1"/>
<dbReference type="InParanoid" id="Q555D2"/>
<dbReference type="OMA" id="KSCSICM"/>
<dbReference type="PRO" id="PR:Q555D2"/>
<dbReference type="Proteomes" id="UP000002195">
    <property type="component" value="Chromosome 2"/>
</dbReference>
<dbReference type="GO" id="GO:0044614">
    <property type="term" value="C:nuclear pore cytoplasmic filaments"/>
    <property type="evidence" value="ECO:0000318"/>
    <property type="project" value="GO_Central"/>
</dbReference>
<dbReference type="GO" id="GO:0008139">
    <property type="term" value="F:nuclear localization sequence binding"/>
    <property type="evidence" value="ECO:0000318"/>
    <property type="project" value="GO_Central"/>
</dbReference>
<dbReference type="GO" id="GO:0003723">
    <property type="term" value="F:RNA binding"/>
    <property type="evidence" value="ECO:0000318"/>
    <property type="project" value="GO_Central"/>
</dbReference>
<dbReference type="GO" id="GO:0017056">
    <property type="term" value="F:structural constituent of nuclear pore"/>
    <property type="evidence" value="ECO:0000318"/>
    <property type="project" value="GO_Central"/>
</dbReference>
<dbReference type="GO" id="GO:0000973">
    <property type="term" value="P:post-transcriptional tethering of RNA polymerase II gene DNA at nuclear periphery"/>
    <property type="evidence" value="ECO:0000318"/>
    <property type="project" value="GO_Central"/>
</dbReference>
<dbReference type="GO" id="GO:0006606">
    <property type="term" value="P:protein import into nucleus"/>
    <property type="evidence" value="ECO:0000318"/>
    <property type="project" value="GO_Central"/>
</dbReference>
<dbReference type="GO" id="GO:0006405">
    <property type="term" value="P:RNA export from nucleus"/>
    <property type="evidence" value="ECO:0000318"/>
    <property type="project" value="GO_Central"/>
</dbReference>
<dbReference type="GO" id="GO:0034398">
    <property type="term" value="P:telomere tethering at nuclear periphery"/>
    <property type="evidence" value="ECO:0000318"/>
    <property type="project" value="GO_Central"/>
</dbReference>
<dbReference type="InterPro" id="IPR025574">
    <property type="entry name" value="Nucleoporin_FG_rpt"/>
</dbReference>
<dbReference type="Pfam" id="PF13634">
    <property type="entry name" value="Nucleoporin_FG"/>
    <property type="match status" value="6"/>
</dbReference>
<sequence>MNGRIRQNQTAYNPYSTSGRNNRNTINSERDESENGSLLMNGSSSPPNNQQTNKAGFFKNMVSKLLSKPLQWMFSNFDESSSSSSSSSSSYDDGNNIPQKGSSTTTTNINNNNNNNNSNSNSNSNNNTNNQNNNSNNNNNNNNKINISDDYDSNLSKVKVPSGINFDTSSLSVADLTRSYQTNISNKNILDNKPILKKDQNPTTTTTTTTAAAVPKKSVAIGGVTNNDKKPTTTTTATTSILKTNINSLYPNLSQDRINANASTFNSSRNIKNNLSPTQTTLKITNNNTIYSNSQFKKKPISSTFNASPFESSIINSSSILSKRKQFDDNNNSNINDNQSIYNRQSIYSPNSKIEQPPLKKRLPNADGTDNSVMMATSQAAKRILEHLDSFSNPVLAHYNPSSTMAPSSQSLYNGNDSTYQPPTSVYRPKIKIPQISINYKYNPYGLSKLLEKKPKSNKDLGLEIPTNSITSSVSLYKKPLNKKSEDESTEPIKTYATPSTTTTTATVANTSSSSSSSSSSSSSSSSSSSSSSSSSSLFSSKPATISSNTTTTTTTSSPPSSSLFSTTSSAASTNTATASSLFSATPATTIATSSPSTSTSTSSSSSGNEKKLDNMFTSDSNKSNLFSKENDGGGVNPFKNLATTVSKTDFIGINGVSTSTSSSTSTSKSSPIAKKDITSINKSAPYEKKKRGLENEDTPLDVPGLKNIEPPSGLFNFSGIKPIETTLFSVSTTTPLATTTTASSSSSSSLFSSPPTTDKSSADKSSADKSSTDKSTSPVTTSIPSFTSSSTSTSLFGPTTTTTDKDSKTASIFSTKPTTEGLFSKPTTSLTSSSLFSSTITTATTTPSIFGDASKSSTSTSLFGSSNTTTAKPPASFGVNLSAAPKKSSPPPPPESDEEDEENEGDEGDEEGDENGELEAEEAFYVPPDSDEENEGDGNGGDLEAEEEFYVPPDSDEEKEKEKKPKTKQQSTQLTGLFAAPPKGGSLFGNTPTGGSLFGSAPTGSSLFSGGSLLTSSFLTKKGENDDDSSDEDSNKKRKKKRESSSSSSTSSNIIIPTTSKKEKIDDKPSTTTTTTTTSLFGSTTTSGLFSNPSTTSTGSLFSSNPLGSTASTSSLFGASTLASTATTTATPTTSLFGSTTPSSSSSSSSSSSSTTSTTTPSNSLFGTSSSSSSTSSSLFGSTTSATTPSSLFGTTTTSSDSKSETKTTPSLSSGGLFSTTSASPFSIPSSTSSSGLFGSTNQTESKVATTTTTAATTATPSTSLFGSTTTPSTSSSTSSLTTTPSTGLFGASSSTTPSTGLFGSATTPSTGLFGASSSSSSSSISSSSTTSTTTTPSTGLFGSTTPSTGLFGSTTTAATTTPSTGLFGSTPSSTTSTTTTPPNGLFGSTTPSTALFGTSTPATTSTLTTSTSTTPSTGLFGSSSSIATTTPSTGLFGSTSSSTTNTAPSTGLFGSTTTSTTATPFGSSSSTPSTGLFGSSSSSTSSSLSSSSTTATQPTGLFGSTAPSTGLFGSTTATNPSTGLFGSTTTTSTTTTPSTGLFGSSSSTPSSTGLFGSSSSTTSSTTTPSTGLFGSAAPSTSSPFSIPTSSTPATSNPFGSNPFPTSSPTTVSSTPSSNPFGAPSLSNSTSSSSLFGAPTTSTAATTTPSFGSSPFGAPSSTSSTPFGASPFGAPTSTSSPPFGAPTSASSTPFGAPQISTSSSTNLFGGASSSTAAPSFVSSPFGAPITSSSSSSSSSLPFGAPTTSSSSSTPFGASPFGNSMASTTSPFGAPAASPSPFGIQAASPSPFGAPAASPSPFGSTPSTAPNPFGNFGAVPANGFSLGKMGTSKKPAKKK</sequence>
<accession>Q555D2</accession>
<accession>C7FZZ2</accession>
<accession>Q555D3</accession>
<gene>
    <name type="ORF">DDB_G0274915</name>
</gene>
<keyword id="KW-1185">Reference proteome</keyword>